<keyword id="KW-0007">Acetylation</keyword>
<keyword id="KW-0227">DNA damage</keyword>
<keyword id="KW-0233">DNA recombination</keyword>
<keyword id="KW-0234">DNA repair</keyword>
<keyword id="KW-0238">DNA-binding</keyword>
<keyword id="KW-1017">Isopeptide bond</keyword>
<keyword id="KW-0539">Nucleus</keyword>
<keyword id="KW-0597">Phosphoprotein</keyword>
<keyword id="KW-1185">Reference proteome</keyword>
<keyword id="KW-0804">Transcription</keyword>
<keyword id="KW-0805">Transcription regulation</keyword>
<keyword id="KW-0832">Ubl conjugation</keyword>
<dbReference type="EMBL" id="BC029701">
    <property type="protein sequence ID" value="AAH29701.1"/>
    <property type="molecule type" value="mRNA"/>
</dbReference>
<dbReference type="EMBL" id="BC033595">
    <property type="protein sequence ID" value="AAH33595.1"/>
    <property type="molecule type" value="mRNA"/>
</dbReference>
<dbReference type="EMBL" id="AK049804">
    <property type="protein sequence ID" value="BAC33927.1"/>
    <property type="status" value="ALT_INIT"/>
    <property type="molecule type" value="mRNA"/>
</dbReference>
<dbReference type="CCDS" id="CCDS22949.1"/>
<dbReference type="RefSeq" id="NP_766354.2">
    <property type="nucleotide sequence ID" value="NM_172766.3"/>
</dbReference>
<dbReference type="SMR" id="Q6PIJ4"/>
<dbReference type="BioGRID" id="231624">
    <property type="interactions" value="4"/>
</dbReference>
<dbReference type="ComplexPortal" id="CPX-878">
    <property type="entry name" value="INO80 chromatin remodeling complex"/>
</dbReference>
<dbReference type="FunCoup" id="Q6PIJ4">
    <property type="interactions" value="3698"/>
</dbReference>
<dbReference type="IntAct" id="Q6PIJ4">
    <property type="interactions" value="4"/>
</dbReference>
<dbReference type="MINT" id="Q6PIJ4"/>
<dbReference type="STRING" id="10090.ENSMUSP00000083341"/>
<dbReference type="GlyGen" id="Q6PIJ4">
    <property type="glycosylation" value="29 sites, 1 O-linked glycan (27 sites)"/>
</dbReference>
<dbReference type="iPTMnet" id="Q6PIJ4"/>
<dbReference type="PhosphoSitePlus" id="Q6PIJ4"/>
<dbReference type="jPOST" id="Q6PIJ4"/>
<dbReference type="PaxDb" id="10090-ENSMUSP00000083341"/>
<dbReference type="PeptideAtlas" id="Q6PIJ4"/>
<dbReference type="ProteomicsDB" id="287418"/>
<dbReference type="Pumba" id="Q6PIJ4"/>
<dbReference type="Antibodypedia" id="1820">
    <property type="antibodies" value="118 antibodies from 26 providers"/>
</dbReference>
<dbReference type="DNASU" id="235134"/>
<dbReference type="Ensembl" id="ENSMUST00000086167.12">
    <property type="protein sequence ID" value="ENSMUSP00000083341.6"/>
    <property type="gene ID" value="ENSMUSG00000042185.15"/>
</dbReference>
<dbReference type="GeneID" id="235134"/>
<dbReference type="KEGG" id="mmu:235134"/>
<dbReference type="UCSC" id="uc009orr.3">
    <property type="organism name" value="mouse"/>
</dbReference>
<dbReference type="AGR" id="MGI:2442410"/>
<dbReference type="CTD" id="4798"/>
<dbReference type="MGI" id="MGI:2442410">
    <property type="gene designation" value="Nfrkb"/>
</dbReference>
<dbReference type="VEuPathDB" id="HostDB:ENSMUSG00000042185"/>
<dbReference type="eggNOG" id="KOG1927">
    <property type="taxonomic scope" value="Eukaryota"/>
</dbReference>
<dbReference type="GeneTree" id="ENSGT00390000016213"/>
<dbReference type="HOGENOM" id="CLU_007638_0_0_1"/>
<dbReference type="InParanoid" id="Q6PIJ4"/>
<dbReference type="OMA" id="ETWQLLP"/>
<dbReference type="OrthoDB" id="70874at2759"/>
<dbReference type="PhylomeDB" id="Q6PIJ4"/>
<dbReference type="TreeFam" id="TF324944"/>
<dbReference type="Reactome" id="R-MMU-5689603">
    <property type="pathway name" value="UCH proteinases"/>
</dbReference>
<dbReference type="Reactome" id="R-MMU-5696394">
    <property type="pathway name" value="DNA Damage Recognition in GG-NER"/>
</dbReference>
<dbReference type="BioGRID-ORCS" id="235134">
    <property type="hits" value="15 hits in 117 CRISPR screens"/>
</dbReference>
<dbReference type="ChiTaRS" id="Nfrkb">
    <property type="organism name" value="mouse"/>
</dbReference>
<dbReference type="PRO" id="PR:Q6PIJ4"/>
<dbReference type="Proteomes" id="UP000000589">
    <property type="component" value="Chromosome 9"/>
</dbReference>
<dbReference type="RNAct" id="Q6PIJ4">
    <property type="molecule type" value="protein"/>
</dbReference>
<dbReference type="Bgee" id="ENSMUSG00000042185">
    <property type="expression patterns" value="Expressed in secondary oocyte and 247 other cell types or tissues"/>
</dbReference>
<dbReference type="ExpressionAtlas" id="Q6PIJ4">
    <property type="expression patterns" value="baseline and differential"/>
</dbReference>
<dbReference type="GO" id="GO:0031011">
    <property type="term" value="C:Ino80 complex"/>
    <property type="evidence" value="ECO:0000266"/>
    <property type="project" value="ComplexPortal"/>
</dbReference>
<dbReference type="GO" id="GO:0005654">
    <property type="term" value="C:nucleoplasm"/>
    <property type="evidence" value="ECO:0007669"/>
    <property type="project" value="Ensembl"/>
</dbReference>
<dbReference type="GO" id="GO:0005634">
    <property type="term" value="C:nucleus"/>
    <property type="evidence" value="ECO:0000250"/>
    <property type="project" value="UniProtKB"/>
</dbReference>
<dbReference type="GO" id="GO:0003677">
    <property type="term" value="F:DNA binding"/>
    <property type="evidence" value="ECO:0007669"/>
    <property type="project" value="UniProtKB-KW"/>
</dbReference>
<dbReference type="GO" id="GO:0002020">
    <property type="term" value="F:protease binding"/>
    <property type="evidence" value="ECO:0007669"/>
    <property type="project" value="Ensembl"/>
</dbReference>
<dbReference type="GO" id="GO:0006338">
    <property type="term" value="P:chromatin remodeling"/>
    <property type="evidence" value="ECO:0000266"/>
    <property type="project" value="ComplexPortal"/>
</dbReference>
<dbReference type="GO" id="GO:0006310">
    <property type="term" value="P:DNA recombination"/>
    <property type="evidence" value="ECO:0007669"/>
    <property type="project" value="UniProtKB-KW"/>
</dbReference>
<dbReference type="GO" id="GO:0006281">
    <property type="term" value="P:DNA repair"/>
    <property type="evidence" value="ECO:0007669"/>
    <property type="project" value="UniProtKB-KW"/>
</dbReference>
<dbReference type="GO" id="GO:0045739">
    <property type="term" value="P:positive regulation of DNA repair"/>
    <property type="evidence" value="ECO:0000314"/>
    <property type="project" value="ComplexPortal"/>
</dbReference>
<dbReference type="GO" id="GO:0045893">
    <property type="term" value="P:positive regulation of DNA-templated transcription"/>
    <property type="evidence" value="ECO:0000266"/>
    <property type="project" value="ComplexPortal"/>
</dbReference>
<dbReference type="GO" id="GO:1904507">
    <property type="term" value="P:positive regulation of telomere maintenance in response to DNA damage"/>
    <property type="evidence" value="ECO:0000315"/>
    <property type="project" value="ComplexPortal"/>
</dbReference>
<dbReference type="GO" id="GO:0051726">
    <property type="term" value="P:regulation of cell cycle"/>
    <property type="evidence" value="ECO:0000266"/>
    <property type="project" value="ComplexPortal"/>
</dbReference>
<dbReference type="GO" id="GO:0033044">
    <property type="term" value="P:regulation of chromosome organization"/>
    <property type="evidence" value="ECO:0000266"/>
    <property type="project" value="ComplexPortal"/>
</dbReference>
<dbReference type="GO" id="GO:0006282">
    <property type="term" value="P:regulation of DNA repair"/>
    <property type="evidence" value="ECO:0000314"/>
    <property type="project" value="ComplexPortal"/>
</dbReference>
<dbReference type="GO" id="GO:0006275">
    <property type="term" value="P:regulation of DNA replication"/>
    <property type="evidence" value="ECO:0000266"/>
    <property type="project" value="ComplexPortal"/>
</dbReference>
<dbReference type="GO" id="GO:0060382">
    <property type="term" value="P:regulation of DNA strand elongation"/>
    <property type="evidence" value="ECO:0000266"/>
    <property type="project" value="ComplexPortal"/>
</dbReference>
<dbReference type="GO" id="GO:0045995">
    <property type="term" value="P:regulation of embryonic development"/>
    <property type="evidence" value="ECO:0000315"/>
    <property type="project" value="ComplexPortal"/>
</dbReference>
<dbReference type="GO" id="GO:0000723">
    <property type="term" value="P:telomere maintenance"/>
    <property type="evidence" value="ECO:0000315"/>
    <property type="project" value="ComplexPortal"/>
</dbReference>
<dbReference type="CDD" id="cd21865">
    <property type="entry name" value="DEUBAD_NFRKB"/>
    <property type="match status" value="1"/>
</dbReference>
<dbReference type="FunFam" id="1.10.10.2430:FF:000001">
    <property type="entry name" value="Nuclear factor related to kappaB binding protein"/>
    <property type="match status" value="1"/>
</dbReference>
<dbReference type="Gene3D" id="1.10.10.2430">
    <property type="entry name" value="NFRKB winged helix-like domain"/>
    <property type="match status" value="1"/>
</dbReference>
<dbReference type="InterPro" id="IPR044867">
    <property type="entry name" value="DEUBAD_dom"/>
</dbReference>
<dbReference type="InterPro" id="IPR024867">
    <property type="entry name" value="NFRKB"/>
</dbReference>
<dbReference type="InterPro" id="IPR025220">
    <property type="entry name" value="NFRKB_winged_dom"/>
</dbReference>
<dbReference type="InterPro" id="IPR038106">
    <property type="entry name" value="NFRKB_winged_sf"/>
</dbReference>
<dbReference type="PANTHER" id="PTHR13052">
    <property type="entry name" value="NFRKB-RELATED"/>
    <property type="match status" value="1"/>
</dbReference>
<dbReference type="PANTHER" id="PTHR13052:SF3">
    <property type="entry name" value="NUCLEAR FACTOR RELATED TO KAPPA-B-BINDING PROTEIN"/>
    <property type="match status" value="1"/>
</dbReference>
<dbReference type="Pfam" id="PF14465">
    <property type="entry name" value="NFRKB_winged"/>
    <property type="match status" value="1"/>
</dbReference>
<dbReference type="PROSITE" id="PS51916">
    <property type="entry name" value="DEUBAD"/>
    <property type="match status" value="1"/>
</dbReference>
<proteinExistence type="evidence at protein level"/>
<protein>
    <recommendedName>
        <fullName>Nuclear factor related to kappa-B-binding protein</fullName>
    </recommendedName>
    <alternativeName>
        <fullName>DNA-binding protein R kappa-B</fullName>
    </alternativeName>
</protein>
<comment type="function">
    <text evidence="1">Binds to the DNA consensus sequence 5'-GGGGAATCTCC-3'.</text>
</comment>
<comment type="function">
    <text evidence="1">Putative regulatory component of the chromatin remodeling INO80 complex which is involved in transcriptional regulation, DNA replication and probably DNA repair. Modulates the deubiquitinase activity of UCHL5 in the INO80 complex (By similarity).</text>
</comment>
<comment type="subunit">
    <text evidence="1">Component of the chromatin remodeling INO80 complex; specifically part of a complex module associated with the N-terminus of INO80. Interacts with UCHL5 (By similarity).</text>
</comment>
<comment type="subcellular location">
    <subcellularLocation>
        <location evidence="1">Nucleus</location>
    </subcellularLocation>
</comment>
<comment type="domain">
    <text evidence="1">NFRKB seems to be mostly disordered. The wing-helix like domain doesn't bind DNA (By similarity).</text>
</comment>
<comment type="similarity">
    <text evidence="5">Belongs to the NFRKB family.</text>
</comment>
<comment type="sequence caution" evidence="5">
    <conflict type="erroneous initiation">
        <sequence resource="EMBL-CDS" id="BAC33927"/>
    </conflict>
    <text>Truncated N-terminus.</text>
</comment>
<gene>
    <name type="primary">Nfrkb</name>
</gene>
<reference key="1">
    <citation type="journal article" date="2004" name="Genome Res.">
        <title>The status, quality, and expansion of the NIH full-length cDNA project: the Mammalian Gene Collection (MGC).</title>
        <authorList>
            <consortium name="The MGC Project Team"/>
        </authorList>
    </citation>
    <scope>NUCLEOTIDE SEQUENCE [LARGE SCALE MRNA]</scope>
    <source>
        <strain>C57BL/6J</strain>
        <strain>FVB/N</strain>
        <tissue>Mammary tumor</tissue>
    </source>
</reference>
<reference key="2">
    <citation type="journal article" date="2005" name="Science">
        <title>The transcriptional landscape of the mammalian genome.</title>
        <authorList>
            <person name="Carninci P."/>
            <person name="Kasukawa T."/>
            <person name="Katayama S."/>
            <person name="Gough J."/>
            <person name="Frith M.C."/>
            <person name="Maeda N."/>
            <person name="Oyama R."/>
            <person name="Ravasi T."/>
            <person name="Lenhard B."/>
            <person name="Wells C."/>
            <person name="Kodzius R."/>
            <person name="Shimokawa K."/>
            <person name="Bajic V.B."/>
            <person name="Brenner S.E."/>
            <person name="Batalov S."/>
            <person name="Forrest A.R."/>
            <person name="Zavolan M."/>
            <person name="Davis M.J."/>
            <person name="Wilming L.G."/>
            <person name="Aidinis V."/>
            <person name="Allen J.E."/>
            <person name="Ambesi-Impiombato A."/>
            <person name="Apweiler R."/>
            <person name="Aturaliya R.N."/>
            <person name="Bailey T.L."/>
            <person name="Bansal M."/>
            <person name="Baxter L."/>
            <person name="Beisel K.W."/>
            <person name="Bersano T."/>
            <person name="Bono H."/>
            <person name="Chalk A.M."/>
            <person name="Chiu K.P."/>
            <person name="Choudhary V."/>
            <person name="Christoffels A."/>
            <person name="Clutterbuck D.R."/>
            <person name="Crowe M.L."/>
            <person name="Dalla E."/>
            <person name="Dalrymple B.P."/>
            <person name="de Bono B."/>
            <person name="Della Gatta G."/>
            <person name="di Bernardo D."/>
            <person name="Down T."/>
            <person name="Engstrom P."/>
            <person name="Fagiolini M."/>
            <person name="Faulkner G."/>
            <person name="Fletcher C.F."/>
            <person name="Fukushima T."/>
            <person name="Furuno M."/>
            <person name="Futaki S."/>
            <person name="Gariboldi M."/>
            <person name="Georgii-Hemming P."/>
            <person name="Gingeras T.R."/>
            <person name="Gojobori T."/>
            <person name="Green R.E."/>
            <person name="Gustincich S."/>
            <person name="Harbers M."/>
            <person name="Hayashi Y."/>
            <person name="Hensch T.K."/>
            <person name="Hirokawa N."/>
            <person name="Hill D."/>
            <person name="Huminiecki L."/>
            <person name="Iacono M."/>
            <person name="Ikeo K."/>
            <person name="Iwama A."/>
            <person name="Ishikawa T."/>
            <person name="Jakt M."/>
            <person name="Kanapin A."/>
            <person name="Katoh M."/>
            <person name="Kawasawa Y."/>
            <person name="Kelso J."/>
            <person name="Kitamura H."/>
            <person name="Kitano H."/>
            <person name="Kollias G."/>
            <person name="Krishnan S.P."/>
            <person name="Kruger A."/>
            <person name="Kummerfeld S.K."/>
            <person name="Kurochkin I.V."/>
            <person name="Lareau L.F."/>
            <person name="Lazarevic D."/>
            <person name="Lipovich L."/>
            <person name="Liu J."/>
            <person name="Liuni S."/>
            <person name="McWilliam S."/>
            <person name="Madan Babu M."/>
            <person name="Madera M."/>
            <person name="Marchionni L."/>
            <person name="Matsuda H."/>
            <person name="Matsuzawa S."/>
            <person name="Miki H."/>
            <person name="Mignone F."/>
            <person name="Miyake S."/>
            <person name="Morris K."/>
            <person name="Mottagui-Tabar S."/>
            <person name="Mulder N."/>
            <person name="Nakano N."/>
            <person name="Nakauchi H."/>
            <person name="Ng P."/>
            <person name="Nilsson R."/>
            <person name="Nishiguchi S."/>
            <person name="Nishikawa S."/>
            <person name="Nori F."/>
            <person name="Ohara O."/>
            <person name="Okazaki Y."/>
            <person name="Orlando V."/>
            <person name="Pang K.C."/>
            <person name="Pavan W.J."/>
            <person name="Pavesi G."/>
            <person name="Pesole G."/>
            <person name="Petrovsky N."/>
            <person name="Piazza S."/>
            <person name="Reed J."/>
            <person name="Reid J.F."/>
            <person name="Ring B.Z."/>
            <person name="Ringwald M."/>
            <person name="Rost B."/>
            <person name="Ruan Y."/>
            <person name="Salzberg S.L."/>
            <person name="Sandelin A."/>
            <person name="Schneider C."/>
            <person name="Schoenbach C."/>
            <person name="Sekiguchi K."/>
            <person name="Semple C.A."/>
            <person name="Seno S."/>
            <person name="Sessa L."/>
            <person name="Sheng Y."/>
            <person name="Shibata Y."/>
            <person name="Shimada H."/>
            <person name="Shimada K."/>
            <person name="Silva D."/>
            <person name="Sinclair B."/>
            <person name="Sperling S."/>
            <person name="Stupka E."/>
            <person name="Sugiura K."/>
            <person name="Sultana R."/>
            <person name="Takenaka Y."/>
            <person name="Taki K."/>
            <person name="Tammoja K."/>
            <person name="Tan S.L."/>
            <person name="Tang S."/>
            <person name="Taylor M.S."/>
            <person name="Tegner J."/>
            <person name="Teichmann S.A."/>
            <person name="Ueda H.R."/>
            <person name="van Nimwegen E."/>
            <person name="Verardo R."/>
            <person name="Wei C.L."/>
            <person name="Yagi K."/>
            <person name="Yamanishi H."/>
            <person name="Zabarovsky E."/>
            <person name="Zhu S."/>
            <person name="Zimmer A."/>
            <person name="Hide W."/>
            <person name="Bult C."/>
            <person name="Grimmond S.M."/>
            <person name="Teasdale R.D."/>
            <person name="Liu E.T."/>
            <person name="Brusic V."/>
            <person name="Quackenbush J."/>
            <person name="Wahlestedt C."/>
            <person name="Mattick J.S."/>
            <person name="Hume D.A."/>
            <person name="Kai C."/>
            <person name="Sasaki D."/>
            <person name="Tomaru Y."/>
            <person name="Fukuda S."/>
            <person name="Kanamori-Katayama M."/>
            <person name="Suzuki M."/>
            <person name="Aoki J."/>
            <person name="Arakawa T."/>
            <person name="Iida J."/>
            <person name="Imamura K."/>
            <person name="Itoh M."/>
            <person name="Kato T."/>
            <person name="Kawaji H."/>
            <person name="Kawagashira N."/>
            <person name="Kawashima T."/>
            <person name="Kojima M."/>
            <person name="Kondo S."/>
            <person name="Konno H."/>
            <person name="Nakano K."/>
            <person name="Ninomiya N."/>
            <person name="Nishio T."/>
            <person name="Okada M."/>
            <person name="Plessy C."/>
            <person name="Shibata K."/>
            <person name="Shiraki T."/>
            <person name="Suzuki S."/>
            <person name="Tagami M."/>
            <person name="Waki K."/>
            <person name="Watahiki A."/>
            <person name="Okamura-Oho Y."/>
            <person name="Suzuki H."/>
            <person name="Kawai J."/>
            <person name="Hayashizaki Y."/>
        </authorList>
    </citation>
    <scope>NUCLEOTIDE SEQUENCE [LARGE SCALE MRNA] OF 504-1296</scope>
    <source>
        <strain>C57BL/6J</strain>
        <tissue>Hippocampus</tissue>
    </source>
</reference>
<reference key="3">
    <citation type="journal article" date="2010" name="Cell">
        <title>A tissue-specific atlas of mouse protein phosphorylation and expression.</title>
        <authorList>
            <person name="Huttlin E.L."/>
            <person name="Jedrychowski M.P."/>
            <person name="Elias J.E."/>
            <person name="Goswami T."/>
            <person name="Rad R."/>
            <person name="Beausoleil S.A."/>
            <person name="Villen J."/>
            <person name="Haas W."/>
            <person name="Sowa M.E."/>
            <person name="Gygi S.P."/>
        </authorList>
    </citation>
    <scope>PHOSPHORYLATION [LARGE SCALE ANALYSIS] AT SER-298 AND SER-1288</scope>
    <scope>IDENTIFICATION BY MASS SPECTROMETRY [LARGE SCALE ANALYSIS]</scope>
    <source>
        <tissue>Brain</tissue>
        <tissue>Brown adipose tissue</tissue>
        <tissue>Kidney</tissue>
        <tissue>Lung</tissue>
        <tissue>Pancreas</tissue>
        <tissue>Spleen</tissue>
        <tissue>Testis</tissue>
    </source>
</reference>
<evidence type="ECO:0000250" key="1"/>
<evidence type="ECO:0000250" key="2">
    <source>
        <dbReference type="UniProtKB" id="Q6P4R8"/>
    </source>
</evidence>
<evidence type="ECO:0000255" key="3">
    <source>
        <dbReference type="PROSITE-ProRule" id="PRU01264"/>
    </source>
</evidence>
<evidence type="ECO:0000256" key="4">
    <source>
        <dbReference type="SAM" id="MobiDB-lite"/>
    </source>
</evidence>
<evidence type="ECO:0000305" key="5"/>
<evidence type="ECO:0007744" key="6">
    <source>
    </source>
</evidence>
<accession>Q6PIJ4</accession>
<accession>Q8BWV5</accession>
<accession>Q8K0X6</accession>
<feature type="chain" id="PRO_0000227808" description="Nuclear factor related to kappa-B-binding protein">
    <location>
        <begin position="1"/>
        <end position="1296"/>
    </location>
</feature>
<feature type="domain" description="DEUBAD" evidence="3">
    <location>
        <begin position="39"/>
        <end position="156"/>
    </location>
</feature>
<feature type="region of interest" description="Disordered" evidence="4">
    <location>
        <begin position="165"/>
        <end position="186"/>
    </location>
</feature>
<feature type="region of interest" description="Disordered" evidence="4">
    <location>
        <begin position="204"/>
        <end position="232"/>
    </location>
</feature>
<feature type="region of interest" description="Winged-helix like domain" evidence="1">
    <location>
        <begin position="370"/>
        <end position="495"/>
    </location>
</feature>
<feature type="region of interest" description="Disordered" evidence="4">
    <location>
        <begin position="663"/>
        <end position="758"/>
    </location>
</feature>
<feature type="region of interest" description="Disordered" evidence="4">
    <location>
        <begin position="1015"/>
        <end position="1036"/>
    </location>
</feature>
<feature type="compositionally biased region" description="Low complexity" evidence="4">
    <location>
        <begin position="216"/>
        <end position="232"/>
    </location>
</feature>
<feature type="compositionally biased region" description="Low complexity" evidence="4">
    <location>
        <begin position="700"/>
        <end position="713"/>
    </location>
</feature>
<feature type="compositionally biased region" description="Pro residues" evidence="4">
    <location>
        <begin position="726"/>
        <end position="737"/>
    </location>
</feature>
<feature type="compositionally biased region" description="Polar residues" evidence="4">
    <location>
        <begin position="741"/>
        <end position="758"/>
    </location>
</feature>
<feature type="compositionally biased region" description="Low complexity" evidence="4">
    <location>
        <begin position="1016"/>
        <end position="1034"/>
    </location>
</feature>
<feature type="modified residue" description="Phosphoserine" evidence="2">
    <location>
        <position position="228"/>
    </location>
</feature>
<feature type="modified residue" description="Phosphoserine" evidence="6">
    <location>
        <position position="298"/>
    </location>
</feature>
<feature type="modified residue" description="Phosphoserine" evidence="2">
    <location>
        <position position="351"/>
    </location>
</feature>
<feature type="modified residue" description="Phosphoserine" evidence="2">
    <location>
        <position position="1019"/>
    </location>
</feature>
<feature type="modified residue" description="N6-acetyllysine" evidence="2">
    <location>
        <position position="1234"/>
    </location>
</feature>
<feature type="modified residue" description="Phosphoserine" evidence="6">
    <location>
        <position position="1288"/>
    </location>
</feature>
<feature type="cross-link" description="Glycyl lysine isopeptide (Lys-Gly) (interchain with G-Cter in SUMO2)" evidence="2">
    <location>
        <position position="327"/>
    </location>
</feature>
<feature type="cross-link" description="Glycyl lysine isopeptide (Lys-Gly) (interchain with G-Cter in SUMO2)" evidence="2">
    <location>
        <position position="469"/>
    </location>
</feature>
<feature type="cross-link" description="Glycyl lysine isopeptide (Lys-Gly) (interchain with G-Cter in SUMO1); alternate" evidence="2">
    <location>
        <position position="488"/>
    </location>
</feature>
<feature type="cross-link" description="Glycyl lysine isopeptide (Lys-Gly) (interchain with G-Cter in SUMO2); alternate" evidence="2">
    <location>
        <position position="488"/>
    </location>
</feature>
<name>NFRKB_MOUSE</name>
<sequence>MDSLDHMLTDPLELGPCGDGHSTGIMEDCLLGGTRVSLPEDLLEDPEIFFDVVSLSTWQEVLSDSQREHLQQFLPRFPADSVEQQRELILALFSGENFRFGNPLHIAQKLFRDGHFNPEVVKYRQLCFKSQYKRYLNSQQQYFHRLLKQILASRSDLLEMARRSGPALPFPHKHHSPSRSPEEREWRTQQRYLKVLREVKEECGDTALSSDEEDLSSWLPSSPARSPSPAVPLRVVPTLSTTDMKTADKIELGDSDLKLMLKKHHEKRKHQPDHPDLLTGDLTLSDIMTRVNAGRKGSLAALYDLAVLKKKVKEKEEKKKKKIKLIKSEAEDLAEPLSSTEGVPTLSQAPSPLAISSIKEEPLEDIKPCLGINEISSSFFSLLLEILLLESQASLPMLEDRVLDWQSSPASSLNSWFSAAPNWAELVLPALQYLAGESRAVPSSFSPFVEFKEKTQQWKLLGQSQDNEKELAALFHLWLETKDQAFCKENEDSSDAMTPVPRVRTDYVVRPSTGEEKRVFQEQERYRYSQPHKAFTFRMHGFESVVGPVKGVFDKETSLNKAREHSLLRSDRPAYVTILSLVRDAAARLPNGEGTRAEICELLKDSQFLAPDVTSTQVNTVVSGALDRLHYEKDPCVKYDIGRKLWIYLHRDRSEEEFERIHQAQAAAAKARKALQQKPKPPSKVKSSNKEGSTKGLSGPSEQSQMSLSDSSMPPTPVTPVTPTTPALPTPISPPPVSAVNRSGSSTVSEPAQSSSGVLLVSSPTMPQLGTMLSPASIQTPPSSQATARVVSHSSSAGLPQVRVVAQPSLPAVSQQSVGPAQPLPQMPAGPQIRVPVTATQTKVVPQAVMATVPVKGQTAAASVQRPGPGQTGLTVTNLPAAVSPVSKTAMSSPGNSAPSASTTAVIQNVTGQNIIKQVSITGQLGVKPQTGSSIPLTATNFRIQGKDVLRLPPSSITTDAKGQTVLRITPDMMATLAKSQVTTVKLTQDLFGAGSGTAGKGISATLHVTSNPVHAADSPAKAPSASVPSSAPAGTTVVKVTPDLKPTETANSAFRLMPALGVSVADQKGKNTVASSEAKPAATIRIVQGLGVMPPKAGQTITVAAHAKQGASVAGGSGTVHSSTVSLPSINAAVSKTVAVASGATSTPISIGTGAPTVRQVPVNTTVVSTSQSGKLPTRITVPLSVISQPMKGKSVVTAPIIKGNLGANLSGLGRNIILTTMPAGTKLIAGNKPVSFLTAQQLQQLQQQGQATQVRIQTVPASHLQQGTASGSSKAVSTVVVTTAPSPKQAPEQQ</sequence>
<organism>
    <name type="scientific">Mus musculus</name>
    <name type="common">Mouse</name>
    <dbReference type="NCBI Taxonomy" id="10090"/>
    <lineage>
        <taxon>Eukaryota</taxon>
        <taxon>Metazoa</taxon>
        <taxon>Chordata</taxon>
        <taxon>Craniata</taxon>
        <taxon>Vertebrata</taxon>
        <taxon>Euteleostomi</taxon>
        <taxon>Mammalia</taxon>
        <taxon>Eutheria</taxon>
        <taxon>Euarchontoglires</taxon>
        <taxon>Glires</taxon>
        <taxon>Rodentia</taxon>
        <taxon>Myomorpha</taxon>
        <taxon>Muroidea</taxon>
        <taxon>Muridae</taxon>
        <taxon>Murinae</taxon>
        <taxon>Mus</taxon>
        <taxon>Mus</taxon>
    </lineage>
</organism>